<reference key="1">
    <citation type="journal article" date="2002" name="Nature">
        <title>The genome sequence of Schizosaccharomyces pombe.</title>
        <authorList>
            <person name="Wood V."/>
            <person name="Gwilliam R."/>
            <person name="Rajandream M.A."/>
            <person name="Lyne M.H."/>
            <person name="Lyne R."/>
            <person name="Stewart A."/>
            <person name="Sgouros J.G."/>
            <person name="Peat N."/>
            <person name="Hayles J."/>
            <person name="Baker S.G."/>
            <person name="Basham D."/>
            <person name="Bowman S."/>
            <person name="Brooks K."/>
            <person name="Brown D."/>
            <person name="Brown S."/>
            <person name="Chillingworth T."/>
            <person name="Churcher C.M."/>
            <person name="Collins M."/>
            <person name="Connor R."/>
            <person name="Cronin A."/>
            <person name="Davis P."/>
            <person name="Feltwell T."/>
            <person name="Fraser A."/>
            <person name="Gentles S."/>
            <person name="Goble A."/>
            <person name="Hamlin N."/>
            <person name="Harris D.E."/>
            <person name="Hidalgo J."/>
            <person name="Hodgson G."/>
            <person name="Holroyd S."/>
            <person name="Hornsby T."/>
            <person name="Howarth S."/>
            <person name="Huckle E.J."/>
            <person name="Hunt S."/>
            <person name="Jagels K."/>
            <person name="James K.D."/>
            <person name="Jones L."/>
            <person name="Jones M."/>
            <person name="Leather S."/>
            <person name="McDonald S."/>
            <person name="McLean J."/>
            <person name="Mooney P."/>
            <person name="Moule S."/>
            <person name="Mungall K.L."/>
            <person name="Murphy L.D."/>
            <person name="Niblett D."/>
            <person name="Odell C."/>
            <person name="Oliver K."/>
            <person name="O'Neil S."/>
            <person name="Pearson D."/>
            <person name="Quail M.A."/>
            <person name="Rabbinowitsch E."/>
            <person name="Rutherford K.M."/>
            <person name="Rutter S."/>
            <person name="Saunders D."/>
            <person name="Seeger K."/>
            <person name="Sharp S."/>
            <person name="Skelton J."/>
            <person name="Simmonds M.N."/>
            <person name="Squares R."/>
            <person name="Squares S."/>
            <person name="Stevens K."/>
            <person name="Taylor K."/>
            <person name="Taylor R.G."/>
            <person name="Tivey A."/>
            <person name="Walsh S.V."/>
            <person name="Warren T."/>
            <person name="Whitehead S."/>
            <person name="Woodward J.R."/>
            <person name="Volckaert G."/>
            <person name="Aert R."/>
            <person name="Robben J."/>
            <person name="Grymonprez B."/>
            <person name="Weltjens I."/>
            <person name="Vanstreels E."/>
            <person name="Rieger M."/>
            <person name="Schaefer M."/>
            <person name="Mueller-Auer S."/>
            <person name="Gabel C."/>
            <person name="Fuchs M."/>
            <person name="Duesterhoeft A."/>
            <person name="Fritzc C."/>
            <person name="Holzer E."/>
            <person name="Moestl D."/>
            <person name="Hilbert H."/>
            <person name="Borzym K."/>
            <person name="Langer I."/>
            <person name="Beck A."/>
            <person name="Lehrach H."/>
            <person name="Reinhardt R."/>
            <person name="Pohl T.M."/>
            <person name="Eger P."/>
            <person name="Zimmermann W."/>
            <person name="Wedler H."/>
            <person name="Wambutt R."/>
            <person name="Purnelle B."/>
            <person name="Goffeau A."/>
            <person name="Cadieu E."/>
            <person name="Dreano S."/>
            <person name="Gloux S."/>
            <person name="Lelaure V."/>
            <person name="Mottier S."/>
            <person name="Galibert F."/>
            <person name="Aves S.J."/>
            <person name="Xiang Z."/>
            <person name="Hunt C."/>
            <person name="Moore K."/>
            <person name="Hurst S.M."/>
            <person name="Lucas M."/>
            <person name="Rochet M."/>
            <person name="Gaillardin C."/>
            <person name="Tallada V.A."/>
            <person name="Garzon A."/>
            <person name="Thode G."/>
            <person name="Daga R.R."/>
            <person name="Cruzado L."/>
            <person name="Jimenez J."/>
            <person name="Sanchez M."/>
            <person name="del Rey F."/>
            <person name="Benito J."/>
            <person name="Dominguez A."/>
            <person name="Revuelta J.L."/>
            <person name="Moreno S."/>
            <person name="Armstrong J."/>
            <person name="Forsburg S.L."/>
            <person name="Cerutti L."/>
            <person name="Lowe T."/>
            <person name="McCombie W.R."/>
            <person name="Paulsen I."/>
            <person name="Potashkin J."/>
            <person name="Shpakovski G.V."/>
            <person name="Ussery D."/>
            <person name="Barrell B.G."/>
            <person name="Nurse P."/>
        </authorList>
    </citation>
    <scope>NUCLEOTIDE SEQUENCE [LARGE SCALE GENOMIC DNA]</scope>
    <source>
        <strain>972 / ATCC 24843</strain>
    </source>
</reference>
<name>YAQ1_SCHPO</name>
<dbReference type="EMBL" id="CU329670">
    <property type="protein sequence ID" value="CAA92381.1"/>
    <property type="molecule type" value="Genomic_DNA"/>
</dbReference>
<dbReference type="PIR" id="T37915">
    <property type="entry name" value="T37915"/>
</dbReference>
<dbReference type="SMR" id="Q10102"/>
<dbReference type="BioGRID" id="278660">
    <property type="interactions" value="6"/>
</dbReference>
<dbReference type="FunCoup" id="Q10102">
    <property type="interactions" value="14"/>
</dbReference>
<dbReference type="STRING" id="284812.Q10102"/>
<dbReference type="iPTMnet" id="Q10102"/>
<dbReference type="PaxDb" id="4896-SPAC18G6.01c.1"/>
<dbReference type="EnsemblFungi" id="SPAC18G6.01c.1">
    <property type="protein sequence ID" value="SPAC18G6.01c.1:pep"/>
    <property type="gene ID" value="SPAC18G6.01c"/>
</dbReference>
<dbReference type="KEGG" id="spo:2542185"/>
<dbReference type="PomBase" id="SPAC18G6.01c"/>
<dbReference type="VEuPathDB" id="FungiDB:SPAC18G6.01c"/>
<dbReference type="eggNOG" id="ENOG502RGD3">
    <property type="taxonomic scope" value="Eukaryota"/>
</dbReference>
<dbReference type="HOGENOM" id="CLU_1074257_0_0_1"/>
<dbReference type="InParanoid" id="Q10102"/>
<dbReference type="OMA" id="GPRYVSF"/>
<dbReference type="PhylomeDB" id="Q10102"/>
<dbReference type="PRO" id="PR:Q10102"/>
<dbReference type="Proteomes" id="UP000002485">
    <property type="component" value="Chromosome I"/>
</dbReference>
<dbReference type="GO" id="GO:0005743">
    <property type="term" value="C:mitochondrial inner membrane"/>
    <property type="evidence" value="ECO:0000304"/>
    <property type="project" value="PomBase"/>
</dbReference>
<dbReference type="GO" id="GO:0005739">
    <property type="term" value="C:mitochondrion"/>
    <property type="evidence" value="ECO:0007005"/>
    <property type="project" value="PomBase"/>
</dbReference>
<dbReference type="GO" id="GO:0020037">
    <property type="term" value="F:heme binding"/>
    <property type="evidence" value="ECO:0000304"/>
    <property type="project" value="PomBase"/>
</dbReference>
<dbReference type="Gene3D" id="3.50.70.10">
    <property type="match status" value="1"/>
</dbReference>
<dbReference type="InterPro" id="IPR016087">
    <property type="entry name" value="Chalcone_isomerase"/>
</dbReference>
<dbReference type="InterPro" id="IPR016088">
    <property type="entry name" value="Chalcone_isomerase_3-sand"/>
</dbReference>
<dbReference type="InterPro" id="IPR036298">
    <property type="entry name" value="Chalcone_isomerase_sf"/>
</dbReference>
<dbReference type="PANTHER" id="PTHR47284">
    <property type="entry name" value="FATTY-ACID-BINDING PROTEIN 2"/>
    <property type="match status" value="1"/>
</dbReference>
<dbReference type="PANTHER" id="PTHR47284:SF3">
    <property type="entry name" value="FATTY-ACID-BINDING PROTEIN 2"/>
    <property type="match status" value="1"/>
</dbReference>
<dbReference type="Pfam" id="PF16035">
    <property type="entry name" value="Chalcone_2"/>
    <property type="match status" value="1"/>
</dbReference>
<dbReference type="SUPFAM" id="SSF54626">
    <property type="entry name" value="Chalcone isomerase"/>
    <property type="match status" value="1"/>
</dbReference>
<sequence length="259" mass="30031">MFGTRFFAYQFCKNWLSKRPGLVFWSSVATINAMYQTRPLYCESVTKTIQQTYEGLVQKRINNEDELFLLGSGPRYVSFLSIHVYDIELYIQKKDVQTVHTILQKEVDPKLGLEMSMKDEEIGSRIVAALLKNEMKYAIKIVPTRNTNFSHLRGGFVRGLQSRMSQNDPAEQAAVSKFRSTFPVNRTCFKETALWMKLYGNDFCYIYKDSEIGHMHDENYMVSNLFLKGYLVGPRVNSEQARESVCLTLRRIMDGTLLF</sequence>
<gene>
    <name type="ORF">SPAC18G6.01c</name>
</gene>
<accession>Q10102</accession>
<feature type="chain" id="PRO_0000116457" description="Uncharacterized protein C18G6.01c">
    <location>
        <begin position="1"/>
        <end position="259"/>
    </location>
</feature>
<proteinExistence type="predicted"/>
<keyword id="KW-1185">Reference proteome</keyword>
<protein>
    <recommendedName>
        <fullName>Uncharacterized protein C18G6.01c</fullName>
    </recommendedName>
</protein>
<organism>
    <name type="scientific">Schizosaccharomyces pombe (strain 972 / ATCC 24843)</name>
    <name type="common">Fission yeast</name>
    <dbReference type="NCBI Taxonomy" id="284812"/>
    <lineage>
        <taxon>Eukaryota</taxon>
        <taxon>Fungi</taxon>
        <taxon>Dikarya</taxon>
        <taxon>Ascomycota</taxon>
        <taxon>Taphrinomycotina</taxon>
        <taxon>Schizosaccharomycetes</taxon>
        <taxon>Schizosaccharomycetales</taxon>
        <taxon>Schizosaccharomycetaceae</taxon>
        <taxon>Schizosaccharomyces</taxon>
    </lineage>
</organism>